<proteinExistence type="inferred from homology"/>
<reference key="1">
    <citation type="submission" date="2008-10" db="EMBL/GenBank/DDBJ databases">
        <title>The complete genome sequence of Helicobacter pylori strain P12.</title>
        <authorList>
            <person name="Fischer W."/>
            <person name="Windhager L."/>
            <person name="Karnholz A."/>
            <person name="Zeiller M."/>
            <person name="Zimmer R."/>
            <person name="Haas R."/>
        </authorList>
    </citation>
    <scope>NUCLEOTIDE SEQUENCE [LARGE SCALE GENOMIC DNA]</scope>
    <source>
        <strain>P12</strain>
    </source>
</reference>
<accession>B6JL09</accession>
<dbReference type="EC" id="4.3.3.7" evidence="1"/>
<dbReference type="EMBL" id="CP001217">
    <property type="protein sequence ID" value="ACJ07587.1"/>
    <property type="molecule type" value="Genomic_DNA"/>
</dbReference>
<dbReference type="SMR" id="B6JL09"/>
<dbReference type="KEGG" id="hpp:HPP12_0430"/>
<dbReference type="HOGENOM" id="CLU_049343_7_0_7"/>
<dbReference type="UniPathway" id="UPA00034">
    <property type="reaction ID" value="UER00017"/>
</dbReference>
<dbReference type="Proteomes" id="UP000008198">
    <property type="component" value="Chromosome"/>
</dbReference>
<dbReference type="GO" id="GO:0005829">
    <property type="term" value="C:cytosol"/>
    <property type="evidence" value="ECO:0007669"/>
    <property type="project" value="TreeGrafter"/>
</dbReference>
<dbReference type="GO" id="GO:0008840">
    <property type="term" value="F:4-hydroxy-tetrahydrodipicolinate synthase activity"/>
    <property type="evidence" value="ECO:0007669"/>
    <property type="project" value="UniProtKB-UniRule"/>
</dbReference>
<dbReference type="GO" id="GO:0019877">
    <property type="term" value="P:diaminopimelate biosynthetic process"/>
    <property type="evidence" value="ECO:0007669"/>
    <property type="project" value="UniProtKB-UniRule"/>
</dbReference>
<dbReference type="GO" id="GO:0009089">
    <property type="term" value="P:lysine biosynthetic process via diaminopimelate"/>
    <property type="evidence" value="ECO:0007669"/>
    <property type="project" value="UniProtKB-UniRule"/>
</dbReference>
<dbReference type="CDD" id="cd00950">
    <property type="entry name" value="DHDPS"/>
    <property type="match status" value="1"/>
</dbReference>
<dbReference type="Gene3D" id="3.20.20.70">
    <property type="entry name" value="Aldolase class I"/>
    <property type="match status" value="1"/>
</dbReference>
<dbReference type="HAMAP" id="MF_00418">
    <property type="entry name" value="DapA"/>
    <property type="match status" value="1"/>
</dbReference>
<dbReference type="InterPro" id="IPR013785">
    <property type="entry name" value="Aldolase_TIM"/>
</dbReference>
<dbReference type="InterPro" id="IPR005263">
    <property type="entry name" value="DapA"/>
</dbReference>
<dbReference type="InterPro" id="IPR002220">
    <property type="entry name" value="DapA-like"/>
</dbReference>
<dbReference type="InterPro" id="IPR020625">
    <property type="entry name" value="Schiff_base-form_aldolases_AS"/>
</dbReference>
<dbReference type="NCBIfam" id="TIGR00674">
    <property type="entry name" value="dapA"/>
    <property type="match status" value="1"/>
</dbReference>
<dbReference type="PANTHER" id="PTHR12128:SF66">
    <property type="entry name" value="4-HYDROXY-2-OXOGLUTARATE ALDOLASE, MITOCHONDRIAL"/>
    <property type="match status" value="1"/>
</dbReference>
<dbReference type="PANTHER" id="PTHR12128">
    <property type="entry name" value="DIHYDRODIPICOLINATE SYNTHASE"/>
    <property type="match status" value="1"/>
</dbReference>
<dbReference type="Pfam" id="PF00701">
    <property type="entry name" value="DHDPS"/>
    <property type="match status" value="1"/>
</dbReference>
<dbReference type="PIRSF" id="PIRSF001365">
    <property type="entry name" value="DHDPS"/>
    <property type="match status" value="1"/>
</dbReference>
<dbReference type="PRINTS" id="PR00146">
    <property type="entry name" value="DHPICSNTHASE"/>
</dbReference>
<dbReference type="SMART" id="SM01130">
    <property type="entry name" value="DHDPS"/>
    <property type="match status" value="1"/>
</dbReference>
<dbReference type="SUPFAM" id="SSF51569">
    <property type="entry name" value="Aldolase"/>
    <property type="match status" value="1"/>
</dbReference>
<dbReference type="PROSITE" id="PS00666">
    <property type="entry name" value="DHDPS_2"/>
    <property type="match status" value="1"/>
</dbReference>
<keyword id="KW-0028">Amino-acid biosynthesis</keyword>
<keyword id="KW-0963">Cytoplasm</keyword>
<keyword id="KW-0220">Diaminopimelate biosynthesis</keyword>
<keyword id="KW-0456">Lyase</keyword>
<keyword id="KW-0457">Lysine biosynthesis</keyword>
<keyword id="KW-0704">Schiff base</keyword>
<gene>
    <name evidence="1" type="primary">dapA</name>
    <name type="ordered locus">HPP12_0430</name>
</gene>
<sequence>MQFHSSSALITPFKKDLSVDEAAYEALIKRQIFQGMDACVPVGTTGESATLTHKEHMRCIEIAIETCKNTKTPSNSRMKVLAGVGSNATSESLSLAKFAQKIGADAILCVSPYYNRPTQQGLFEHYKTIAQSVEIPVMLYDVPSRTGVSIEVPTALKLFREIPNIKAIKEASGSLKRVTELHYHEKDFKIFSGEDSLNHSIMFSGGCGVISVTGNLMPNLISQMVNCALKLEYQQALEIQNKLFHLHQALFVETNPIPIKMAMHLAGLIENPSYRLPLVAPSKETIQLLEKTLQQYEVIA</sequence>
<comment type="function">
    <text evidence="1">Catalyzes the condensation of (S)-aspartate-beta-semialdehyde [(S)-ASA] and pyruvate to 4-hydroxy-tetrahydrodipicolinate (HTPA).</text>
</comment>
<comment type="catalytic activity">
    <reaction evidence="1">
        <text>L-aspartate 4-semialdehyde + pyruvate = (2S,4S)-4-hydroxy-2,3,4,5-tetrahydrodipicolinate + H2O + H(+)</text>
        <dbReference type="Rhea" id="RHEA:34171"/>
        <dbReference type="ChEBI" id="CHEBI:15361"/>
        <dbReference type="ChEBI" id="CHEBI:15377"/>
        <dbReference type="ChEBI" id="CHEBI:15378"/>
        <dbReference type="ChEBI" id="CHEBI:67139"/>
        <dbReference type="ChEBI" id="CHEBI:537519"/>
        <dbReference type="EC" id="4.3.3.7"/>
    </reaction>
</comment>
<comment type="pathway">
    <text evidence="1">Amino-acid biosynthesis; L-lysine biosynthesis via DAP pathway; (S)-tetrahydrodipicolinate from L-aspartate: step 3/4.</text>
</comment>
<comment type="subunit">
    <text evidence="1">Homotetramer; dimer of dimers.</text>
</comment>
<comment type="subcellular location">
    <subcellularLocation>
        <location evidence="1">Cytoplasm</location>
    </subcellularLocation>
</comment>
<comment type="similarity">
    <text evidence="1">Belongs to the DapA family.</text>
</comment>
<comment type="caution">
    <text evidence="2">Was originally thought to be a dihydrodipicolinate synthase (DHDPS), catalyzing the condensation of (S)-aspartate-beta-semialdehyde [(S)-ASA] and pyruvate to dihydrodipicolinate (DHDP). However, it was shown in E.coli that the product of the enzymatic reaction is not dihydrodipicolinate but in fact (4S)-4-hydroxy-2,3,4,5-tetrahydro-(2S)-dipicolinic acid (HTPA), and that the consecutive dehydration reaction leading to DHDP is not spontaneous but catalyzed by DapB.</text>
</comment>
<protein>
    <recommendedName>
        <fullName evidence="1">4-hydroxy-tetrahydrodipicolinate synthase</fullName>
        <shortName evidence="1">HTPA synthase</shortName>
        <ecNumber evidence="1">4.3.3.7</ecNumber>
    </recommendedName>
</protein>
<feature type="chain" id="PRO_1000124040" description="4-hydroxy-tetrahydrodipicolinate synthase">
    <location>
        <begin position="1"/>
        <end position="300"/>
    </location>
</feature>
<feature type="active site" description="Proton donor/acceptor" evidence="1">
    <location>
        <position position="140"/>
    </location>
</feature>
<feature type="active site" description="Schiff-base intermediate with substrate" evidence="1">
    <location>
        <position position="169"/>
    </location>
</feature>
<feature type="binding site" evidence="1">
    <location>
        <position position="45"/>
    </location>
    <ligand>
        <name>pyruvate</name>
        <dbReference type="ChEBI" id="CHEBI:15361"/>
    </ligand>
</feature>
<feature type="binding site" evidence="1">
    <location>
        <position position="210"/>
    </location>
    <ligand>
        <name>pyruvate</name>
        <dbReference type="ChEBI" id="CHEBI:15361"/>
    </ligand>
</feature>
<feature type="site" description="Part of a proton relay during catalysis" evidence="1">
    <location>
        <position position="44"/>
    </location>
</feature>
<feature type="site" description="Part of a proton relay during catalysis" evidence="1">
    <location>
        <position position="114"/>
    </location>
</feature>
<name>DAPA_HELP2</name>
<evidence type="ECO:0000255" key="1">
    <source>
        <dbReference type="HAMAP-Rule" id="MF_00418"/>
    </source>
</evidence>
<evidence type="ECO:0000305" key="2"/>
<organism>
    <name type="scientific">Helicobacter pylori (strain P12)</name>
    <dbReference type="NCBI Taxonomy" id="570508"/>
    <lineage>
        <taxon>Bacteria</taxon>
        <taxon>Pseudomonadati</taxon>
        <taxon>Campylobacterota</taxon>
        <taxon>Epsilonproteobacteria</taxon>
        <taxon>Campylobacterales</taxon>
        <taxon>Helicobacteraceae</taxon>
        <taxon>Helicobacter</taxon>
    </lineage>
</organism>